<protein>
    <recommendedName>
        <fullName>NAD(P)H-quinone oxidoreductase subunit 5, chloroplastic</fullName>
        <ecNumber>7.1.1.-</ecNumber>
    </recommendedName>
    <alternativeName>
        <fullName>NAD(P)H dehydrogenase subunit 5</fullName>
    </alternativeName>
    <alternativeName>
        <fullName>NADH-plastoquinone oxidoreductase subunit 5</fullName>
    </alternativeName>
</protein>
<keyword id="KW-0150">Chloroplast</keyword>
<keyword id="KW-0472">Membrane</keyword>
<keyword id="KW-0520">NAD</keyword>
<keyword id="KW-0521">NADP</keyword>
<keyword id="KW-0934">Plastid</keyword>
<keyword id="KW-0618">Plastoquinone</keyword>
<keyword id="KW-0874">Quinone</keyword>
<keyword id="KW-0793">Thylakoid</keyword>
<keyword id="KW-1278">Translocase</keyword>
<keyword id="KW-0812">Transmembrane</keyword>
<keyword id="KW-1133">Transmembrane helix</keyword>
<keyword id="KW-0813">Transport</keyword>
<gene>
    <name type="primary">ndhF</name>
</gene>
<geneLocation type="chloroplast"/>
<evidence type="ECO:0000250" key="1"/>
<evidence type="ECO:0000255" key="2"/>
<evidence type="ECO:0000305" key="3"/>
<proteinExistence type="inferred from homology"/>
<reference key="1">
    <citation type="journal article" date="1995" name="Proc. Natl. Acad. Sci. U.S.A.">
        <title>ndhF sequence evolution and the major clades in the sunflower family.</title>
        <authorList>
            <person name="Kim K.-J."/>
            <person name="Jansen R.K."/>
        </authorList>
    </citation>
    <scope>NUCLEOTIDE SEQUENCE [GENOMIC DNA]</scope>
</reference>
<feature type="chain" id="PRO_0000118164" description="NAD(P)H-quinone oxidoreductase subunit 5, chloroplastic">
    <location>
        <begin position="1"/>
        <end position="744"/>
    </location>
</feature>
<feature type="transmembrane region" description="Helical" evidence="2">
    <location>
        <begin position="9"/>
        <end position="29"/>
    </location>
</feature>
<feature type="transmembrane region" description="Helical" evidence="2">
    <location>
        <begin position="40"/>
        <end position="60"/>
    </location>
</feature>
<feature type="transmembrane region" description="Helical" evidence="2">
    <location>
        <begin position="89"/>
        <end position="109"/>
    </location>
</feature>
<feature type="transmembrane region" description="Helical" evidence="2">
    <location>
        <begin position="125"/>
        <end position="145"/>
    </location>
</feature>
<feature type="transmembrane region" description="Helical" evidence="2">
    <location>
        <begin position="147"/>
        <end position="167"/>
    </location>
</feature>
<feature type="transmembrane region" description="Helical" evidence="2">
    <location>
        <begin position="185"/>
        <end position="205"/>
    </location>
</feature>
<feature type="transmembrane region" description="Helical" evidence="2">
    <location>
        <begin position="219"/>
        <end position="239"/>
    </location>
</feature>
<feature type="transmembrane region" description="Helical" evidence="2">
    <location>
        <begin position="258"/>
        <end position="278"/>
    </location>
</feature>
<feature type="transmembrane region" description="Helical" evidence="2">
    <location>
        <begin position="290"/>
        <end position="312"/>
    </location>
</feature>
<feature type="transmembrane region" description="Helical" evidence="2">
    <location>
        <begin position="327"/>
        <end position="347"/>
    </location>
</feature>
<feature type="transmembrane region" description="Helical" evidence="2">
    <location>
        <begin position="354"/>
        <end position="374"/>
    </location>
</feature>
<feature type="transmembrane region" description="Helical" evidence="2">
    <location>
        <begin position="396"/>
        <end position="416"/>
    </location>
</feature>
<feature type="transmembrane region" description="Helical" evidence="2">
    <location>
        <begin position="425"/>
        <end position="445"/>
    </location>
</feature>
<feature type="transmembrane region" description="Helical" evidence="2">
    <location>
        <begin position="549"/>
        <end position="569"/>
    </location>
</feature>
<feature type="transmembrane region" description="Helical" evidence="2">
    <location>
        <begin position="608"/>
        <end position="628"/>
    </location>
</feature>
<feature type="transmembrane region" description="Helical" evidence="2">
    <location>
        <begin position="724"/>
        <end position="744"/>
    </location>
</feature>
<comment type="function">
    <text evidence="1">NDH shuttles electrons from NAD(P)H:plastoquinone, via FMN and iron-sulfur (Fe-S) centers, to quinones in the photosynthetic chain and possibly in a chloroplast respiratory chain. The immediate electron acceptor for the enzyme in this species is believed to be plastoquinone. Couples the redox reaction to proton translocation, and thus conserves the redox energy in a proton gradient (By similarity).</text>
</comment>
<comment type="catalytic activity">
    <reaction>
        <text>a plastoquinone + NADH + (n+1) H(+)(in) = a plastoquinol + NAD(+) + n H(+)(out)</text>
        <dbReference type="Rhea" id="RHEA:42608"/>
        <dbReference type="Rhea" id="RHEA-COMP:9561"/>
        <dbReference type="Rhea" id="RHEA-COMP:9562"/>
        <dbReference type="ChEBI" id="CHEBI:15378"/>
        <dbReference type="ChEBI" id="CHEBI:17757"/>
        <dbReference type="ChEBI" id="CHEBI:57540"/>
        <dbReference type="ChEBI" id="CHEBI:57945"/>
        <dbReference type="ChEBI" id="CHEBI:62192"/>
    </reaction>
</comment>
<comment type="catalytic activity">
    <reaction>
        <text>a plastoquinone + NADPH + (n+1) H(+)(in) = a plastoquinol + NADP(+) + n H(+)(out)</text>
        <dbReference type="Rhea" id="RHEA:42612"/>
        <dbReference type="Rhea" id="RHEA-COMP:9561"/>
        <dbReference type="Rhea" id="RHEA-COMP:9562"/>
        <dbReference type="ChEBI" id="CHEBI:15378"/>
        <dbReference type="ChEBI" id="CHEBI:17757"/>
        <dbReference type="ChEBI" id="CHEBI:57783"/>
        <dbReference type="ChEBI" id="CHEBI:58349"/>
        <dbReference type="ChEBI" id="CHEBI:62192"/>
    </reaction>
</comment>
<comment type="subunit">
    <text evidence="1">NDH is composed of at least 16 different subunits, 5 of which are encoded in the nucleus.</text>
</comment>
<comment type="subcellular location">
    <subcellularLocation>
        <location evidence="1">Plastid</location>
        <location evidence="1">Chloroplast thylakoid membrane</location>
        <topology evidence="1">Multi-pass membrane protein</topology>
    </subcellularLocation>
</comment>
<comment type="similarity">
    <text evidence="3">Belongs to the complex I subunit 5 family.</text>
</comment>
<accession>P51095</accession>
<sequence>MEQTYQYAWIIPFLPLPVPMLIGLGLLLFPTATKSLRRMWAFQSVLLLSIVMIFSMNLSIQQINSSSVYQYVWSWIINNDFSLEFGYLIDPLTSIMSILITTVGIMVLIYSDNYMSHDHGYLRFFAYMSFFSTSMLGLVTSSNLIQIYIFWELVGICSYLLIGFWFTRPVAAKACQKAFVTNRVGDFGLLLGILGFYWITGSFEFRNLFQIFNNLISNNEVNLLFVTLCAVLLFAGAIAKSAQFPLHVWLPDAMEGPTPISALIHAATMVAAGIFLVARLLPLFIVIPHIMNFISLIGIITVFLGATLALAQKDIKRGLAYSTMSQLGYMMLALGMGSYRSALFHLITHAYSKALLFLGSGSVIHSMETLVGYCPKKSQNMVLMGGLTKHVPITKTSFLLGTLSLCGIPPLACFWSKDEILNDSWLYSPIFAIIAWSTAGLTAFYMCRIYLLTFEGHLNVQFQNYSGKKNTPFYSISLWGKEGSKISNKNFRLVTLLKMKKNGRASFFSNKVYKIDENLRNIIQPFLSIPHFGTTKTYSYPYESDNTMLFPILILVLFTLFVGFLGIPFNQDGVDLDILSKWLTPSINLLHKNSNNSIDWYEFCKDAVFSVTISSFGIFIAFFLYKPVYSSFQNLDLINSFVKIDPKRIFSDKIKNGIYDWSYNRGYIDAFYGTFLTVGIRKLAEFAHFFDRRIIDGIPNGVGLMSFFVAEVIKSVGGGRISSYLFFYFSYVSIFLVIYYFLNF</sequence>
<organism>
    <name type="scientific">Adenocaulon himalaicum</name>
    <name type="common">Trailplant</name>
    <dbReference type="NCBI Taxonomy" id="41468"/>
    <lineage>
        <taxon>Eukaryota</taxon>
        <taxon>Viridiplantae</taxon>
        <taxon>Streptophyta</taxon>
        <taxon>Embryophyta</taxon>
        <taxon>Tracheophyta</taxon>
        <taxon>Spermatophyta</taxon>
        <taxon>Magnoliopsida</taxon>
        <taxon>eudicotyledons</taxon>
        <taxon>Gunneridae</taxon>
        <taxon>Pentapetalae</taxon>
        <taxon>asterids</taxon>
        <taxon>campanulids</taxon>
        <taxon>Asterales</taxon>
        <taxon>Asteraceae</taxon>
        <taxon>Mutisioideae</taxon>
        <taxon>Mutisieae</taxon>
        <taxon>Adenocaulon</taxon>
    </lineage>
</organism>
<name>NU5C_ADEHI</name>
<dbReference type="EC" id="7.1.1.-"/>
<dbReference type="EMBL" id="L39401">
    <property type="protein sequence ID" value="AAC37721.1"/>
    <property type="molecule type" value="Genomic_DNA"/>
</dbReference>
<dbReference type="PIR" id="T12611">
    <property type="entry name" value="T12611"/>
</dbReference>
<dbReference type="SMR" id="P51095"/>
<dbReference type="GO" id="GO:0009535">
    <property type="term" value="C:chloroplast thylakoid membrane"/>
    <property type="evidence" value="ECO:0007669"/>
    <property type="project" value="UniProtKB-SubCell"/>
</dbReference>
<dbReference type="GO" id="GO:0008137">
    <property type="term" value="F:NADH dehydrogenase (ubiquinone) activity"/>
    <property type="evidence" value="ECO:0007669"/>
    <property type="project" value="InterPro"/>
</dbReference>
<dbReference type="GO" id="GO:0048038">
    <property type="term" value="F:quinone binding"/>
    <property type="evidence" value="ECO:0007669"/>
    <property type="project" value="UniProtKB-KW"/>
</dbReference>
<dbReference type="GO" id="GO:0042773">
    <property type="term" value="P:ATP synthesis coupled electron transport"/>
    <property type="evidence" value="ECO:0007669"/>
    <property type="project" value="InterPro"/>
</dbReference>
<dbReference type="GO" id="GO:0015990">
    <property type="term" value="P:electron transport coupled proton transport"/>
    <property type="evidence" value="ECO:0007669"/>
    <property type="project" value="TreeGrafter"/>
</dbReference>
<dbReference type="Gene3D" id="1.20.5.2700">
    <property type="match status" value="1"/>
</dbReference>
<dbReference type="InterPro" id="IPR002128">
    <property type="entry name" value="NADH_UbQ_OxRdtase_chlpt_su5_C"/>
</dbReference>
<dbReference type="InterPro" id="IPR018393">
    <property type="entry name" value="NADHpl_OxRdtase_5_subgr"/>
</dbReference>
<dbReference type="InterPro" id="IPR001750">
    <property type="entry name" value="ND/Mrp_TM"/>
</dbReference>
<dbReference type="InterPro" id="IPR003945">
    <property type="entry name" value="NU5C-like"/>
</dbReference>
<dbReference type="InterPro" id="IPR001516">
    <property type="entry name" value="Proton_antipo_N"/>
</dbReference>
<dbReference type="NCBIfam" id="TIGR01974">
    <property type="entry name" value="NDH_I_L"/>
    <property type="match status" value="1"/>
</dbReference>
<dbReference type="NCBIfam" id="NF005141">
    <property type="entry name" value="PRK06590.1"/>
    <property type="match status" value="1"/>
</dbReference>
<dbReference type="PANTHER" id="PTHR42829">
    <property type="entry name" value="NADH-UBIQUINONE OXIDOREDUCTASE CHAIN 5"/>
    <property type="match status" value="1"/>
</dbReference>
<dbReference type="PANTHER" id="PTHR42829:SF2">
    <property type="entry name" value="NADH-UBIQUINONE OXIDOREDUCTASE CHAIN 5"/>
    <property type="match status" value="1"/>
</dbReference>
<dbReference type="Pfam" id="PF01010">
    <property type="entry name" value="Proton_antipo_C"/>
    <property type="match status" value="1"/>
</dbReference>
<dbReference type="Pfam" id="PF00361">
    <property type="entry name" value="Proton_antipo_M"/>
    <property type="match status" value="1"/>
</dbReference>
<dbReference type="Pfam" id="PF00662">
    <property type="entry name" value="Proton_antipo_N"/>
    <property type="match status" value="1"/>
</dbReference>
<dbReference type="PRINTS" id="PR01434">
    <property type="entry name" value="NADHDHGNASE5"/>
</dbReference>
<dbReference type="PRINTS" id="PR01435">
    <property type="entry name" value="NPOXDRDTASE5"/>
</dbReference>